<proteinExistence type="inferred from homology"/>
<comment type="function">
    <text evidence="1">Catalyzes the reaction of cyanate with bicarbonate to produce ammonia and carbon dioxide.</text>
</comment>
<comment type="catalytic activity">
    <reaction evidence="1">
        <text>cyanate + hydrogencarbonate + 3 H(+) = NH4(+) + 2 CO2</text>
        <dbReference type="Rhea" id="RHEA:11120"/>
        <dbReference type="ChEBI" id="CHEBI:15378"/>
        <dbReference type="ChEBI" id="CHEBI:16526"/>
        <dbReference type="ChEBI" id="CHEBI:17544"/>
        <dbReference type="ChEBI" id="CHEBI:28938"/>
        <dbReference type="ChEBI" id="CHEBI:29195"/>
        <dbReference type="EC" id="4.2.1.104"/>
    </reaction>
</comment>
<comment type="similarity">
    <text evidence="1">Belongs to the cyanase family.</text>
</comment>
<evidence type="ECO:0000255" key="1">
    <source>
        <dbReference type="HAMAP-Rule" id="MF_03139"/>
    </source>
</evidence>
<sequence>MSLATLDATQHPNLPASAATLFKAKAQKKLSFEQIAQHIGRNEVATAALFYGQAKASPEDIQKLSELLNISPQVLEEQLSGFPDRGRSVEMPPKEPLIYRLYEIVQNYGYAYKAVLNEKFGDGIMSAISFSTKVEKETDADGNNWAVITLRGKW</sequence>
<keyword id="KW-0456">Lyase</keyword>
<name>CYNS_ASPFC</name>
<gene>
    <name evidence="1" type="primary">cyn1</name>
    <name type="ORF">AFUB_032210</name>
</gene>
<reference key="1">
    <citation type="journal article" date="2008" name="PLoS Genet.">
        <title>Genomic islands in the pathogenic filamentous fungus Aspergillus fumigatus.</title>
        <authorList>
            <person name="Fedorova N.D."/>
            <person name="Khaldi N."/>
            <person name="Joardar V.S."/>
            <person name="Maiti R."/>
            <person name="Amedeo P."/>
            <person name="Anderson M.J."/>
            <person name="Crabtree J."/>
            <person name="Silva J.C."/>
            <person name="Badger J.H."/>
            <person name="Albarraq A."/>
            <person name="Angiuoli S."/>
            <person name="Bussey H."/>
            <person name="Bowyer P."/>
            <person name="Cotty P.J."/>
            <person name="Dyer P.S."/>
            <person name="Egan A."/>
            <person name="Galens K."/>
            <person name="Fraser-Liggett C.M."/>
            <person name="Haas B.J."/>
            <person name="Inman J.M."/>
            <person name="Kent R."/>
            <person name="Lemieux S."/>
            <person name="Malavazi I."/>
            <person name="Orvis J."/>
            <person name="Roemer T."/>
            <person name="Ronning C.M."/>
            <person name="Sundaram J.P."/>
            <person name="Sutton G."/>
            <person name="Turner G."/>
            <person name="Venter J.C."/>
            <person name="White O.R."/>
            <person name="Whitty B.R."/>
            <person name="Youngman P."/>
            <person name="Wolfe K.H."/>
            <person name="Goldman G.H."/>
            <person name="Wortman J.R."/>
            <person name="Jiang B."/>
            <person name="Denning D.W."/>
            <person name="Nierman W.C."/>
        </authorList>
    </citation>
    <scope>NUCLEOTIDE SEQUENCE [LARGE SCALE GENOMIC DNA]</scope>
    <source>
        <strain>CBS 144.89 / FGSC A1163 / CEA10</strain>
    </source>
</reference>
<accession>B0XV83</accession>
<feature type="chain" id="PRO_0000403242" description="Cyanate hydratase">
    <location>
        <begin position="1"/>
        <end position="154"/>
    </location>
</feature>
<feature type="active site" evidence="1">
    <location>
        <position position="100"/>
    </location>
</feature>
<feature type="active site" evidence="1">
    <location>
        <position position="103"/>
    </location>
</feature>
<feature type="active site" evidence="1">
    <location>
        <position position="126"/>
    </location>
</feature>
<organism>
    <name type="scientific">Aspergillus fumigatus (strain CBS 144.89 / FGSC A1163 / CEA10)</name>
    <name type="common">Neosartorya fumigata</name>
    <dbReference type="NCBI Taxonomy" id="451804"/>
    <lineage>
        <taxon>Eukaryota</taxon>
        <taxon>Fungi</taxon>
        <taxon>Dikarya</taxon>
        <taxon>Ascomycota</taxon>
        <taxon>Pezizomycotina</taxon>
        <taxon>Eurotiomycetes</taxon>
        <taxon>Eurotiomycetidae</taxon>
        <taxon>Eurotiales</taxon>
        <taxon>Aspergillaceae</taxon>
        <taxon>Aspergillus</taxon>
        <taxon>Aspergillus subgen. Fumigati</taxon>
    </lineage>
</organism>
<protein>
    <recommendedName>
        <fullName evidence="1">Cyanate hydratase</fullName>
        <shortName evidence="1">Cyanase</shortName>
        <ecNumber evidence="1">4.2.1.104</ecNumber>
    </recommendedName>
    <alternativeName>
        <fullName evidence="1">Cyanate hydrolase</fullName>
    </alternativeName>
    <alternativeName>
        <fullName evidence="1">Cyanate lyase</fullName>
    </alternativeName>
</protein>
<dbReference type="EC" id="4.2.1.104" evidence="1"/>
<dbReference type="EMBL" id="DS499595">
    <property type="protein sequence ID" value="EDP55158.1"/>
    <property type="molecule type" value="Genomic_DNA"/>
</dbReference>
<dbReference type="SMR" id="B0XV83"/>
<dbReference type="EnsemblFungi" id="EDP55158">
    <property type="protein sequence ID" value="EDP55158"/>
    <property type="gene ID" value="AFUB_032210"/>
</dbReference>
<dbReference type="VEuPathDB" id="FungiDB:AFUB_032210"/>
<dbReference type="HOGENOM" id="CLU_103452_0_0_1"/>
<dbReference type="OrthoDB" id="14405at5052"/>
<dbReference type="PhylomeDB" id="B0XV83"/>
<dbReference type="Proteomes" id="UP000001699">
    <property type="component" value="Unassembled WGS sequence"/>
</dbReference>
<dbReference type="GO" id="GO:0008824">
    <property type="term" value="F:cyanate hydratase activity"/>
    <property type="evidence" value="ECO:0007669"/>
    <property type="project" value="UniProtKB-UniRule"/>
</dbReference>
<dbReference type="GO" id="GO:0003677">
    <property type="term" value="F:DNA binding"/>
    <property type="evidence" value="ECO:0007669"/>
    <property type="project" value="InterPro"/>
</dbReference>
<dbReference type="GO" id="GO:0009439">
    <property type="term" value="P:cyanate metabolic process"/>
    <property type="evidence" value="ECO:0007669"/>
    <property type="project" value="UniProtKB-UniRule"/>
</dbReference>
<dbReference type="CDD" id="cd00559">
    <property type="entry name" value="Cyanase_C"/>
    <property type="match status" value="1"/>
</dbReference>
<dbReference type="Gene3D" id="3.30.1160.10">
    <property type="entry name" value="Cyanate lyase, C-terminal domain"/>
    <property type="match status" value="1"/>
</dbReference>
<dbReference type="Gene3D" id="1.10.260.40">
    <property type="entry name" value="lambda repressor-like DNA-binding domains"/>
    <property type="match status" value="1"/>
</dbReference>
<dbReference type="HAMAP" id="MF_00535">
    <property type="entry name" value="Cyanate_hydrat"/>
    <property type="match status" value="1"/>
</dbReference>
<dbReference type="InterPro" id="IPR001387">
    <property type="entry name" value="Cro/C1-type_HTH"/>
</dbReference>
<dbReference type="InterPro" id="IPR008076">
    <property type="entry name" value="Cyanase"/>
</dbReference>
<dbReference type="InterPro" id="IPR003712">
    <property type="entry name" value="Cyanate_lyase_C"/>
</dbReference>
<dbReference type="InterPro" id="IPR036581">
    <property type="entry name" value="Cyanate_lyase_C_sf"/>
</dbReference>
<dbReference type="InterPro" id="IPR010982">
    <property type="entry name" value="Lambda_DNA-bd_dom_sf"/>
</dbReference>
<dbReference type="NCBIfam" id="TIGR00673">
    <property type="entry name" value="cynS"/>
    <property type="match status" value="1"/>
</dbReference>
<dbReference type="PANTHER" id="PTHR34186">
    <property type="entry name" value="CYANATE HYDRATASE"/>
    <property type="match status" value="1"/>
</dbReference>
<dbReference type="PANTHER" id="PTHR34186:SF2">
    <property type="entry name" value="CYANATE HYDRATASE"/>
    <property type="match status" value="1"/>
</dbReference>
<dbReference type="Pfam" id="PF02560">
    <property type="entry name" value="Cyanate_lyase"/>
    <property type="match status" value="1"/>
</dbReference>
<dbReference type="PIRSF" id="PIRSF001263">
    <property type="entry name" value="Cyanate_hydratas"/>
    <property type="match status" value="1"/>
</dbReference>
<dbReference type="PRINTS" id="PR01693">
    <property type="entry name" value="CYANASE"/>
</dbReference>
<dbReference type="SMART" id="SM01116">
    <property type="entry name" value="Cyanate_lyase"/>
    <property type="match status" value="1"/>
</dbReference>
<dbReference type="SUPFAM" id="SSF55234">
    <property type="entry name" value="Cyanase C-terminal domain"/>
    <property type="match status" value="1"/>
</dbReference>
<dbReference type="SUPFAM" id="SSF47413">
    <property type="entry name" value="lambda repressor-like DNA-binding domains"/>
    <property type="match status" value="1"/>
</dbReference>